<proteinExistence type="evidence at protein level"/>
<dbReference type="EC" id="3.1.3.7" evidence="2 3"/>
<dbReference type="EMBL" id="M55170">
    <property type="protein sequence ID" value="AAA23444.1"/>
    <property type="molecule type" value="Genomic_DNA"/>
</dbReference>
<dbReference type="EMBL" id="M80795">
    <property type="protein sequence ID" value="AAA23657.1"/>
    <property type="molecule type" value="Genomic_DNA"/>
</dbReference>
<dbReference type="EMBL" id="U14003">
    <property type="protein sequence ID" value="AAA97110.1"/>
    <property type="molecule type" value="Genomic_DNA"/>
</dbReference>
<dbReference type="EMBL" id="U00096">
    <property type="protein sequence ID" value="AAC77171.1"/>
    <property type="molecule type" value="Genomic_DNA"/>
</dbReference>
<dbReference type="EMBL" id="AP009048">
    <property type="protein sequence ID" value="BAE78215.1"/>
    <property type="molecule type" value="Genomic_DNA"/>
</dbReference>
<dbReference type="EMBL" id="X54008">
    <property type="protein sequence ID" value="CAA37953.1"/>
    <property type="molecule type" value="Genomic_DNA"/>
</dbReference>
<dbReference type="PIR" id="S56439">
    <property type="entry name" value="S56439"/>
</dbReference>
<dbReference type="RefSeq" id="NP_418635.1">
    <property type="nucleotide sequence ID" value="NC_000913.3"/>
</dbReference>
<dbReference type="RefSeq" id="WP_000886919.1">
    <property type="nucleotide sequence ID" value="NZ_LN832404.1"/>
</dbReference>
<dbReference type="SMR" id="P22255"/>
<dbReference type="BioGRID" id="4259304">
    <property type="interactions" value="44"/>
</dbReference>
<dbReference type="DIP" id="DIP-9385N"/>
<dbReference type="FunCoup" id="P22255">
    <property type="interactions" value="280"/>
</dbReference>
<dbReference type="IntAct" id="P22255">
    <property type="interactions" value="6"/>
</dbReference>
<dbReference type="STRING" id="511145.b4214"/>
<dbReference type="jPOST" id="P22255"/>
<dbReference type="PaxDb" id="511145-b4214"/>
<dbReference type="EnsemblBacteria" id="AAC77171">
    <property type="protein sequence ID" value="AAC77171"/>
    <property type="gene ID" value="b4214"/>
</dbReference>
<dbReference type="GeneID" id="948728"/>
<dbReference type="KEGG" id="ecj:JW4172"/>
<dbReference type="KEGG" id="eco:b4214"/>
<dbReference type="KEGG" id="ecoc:C3026_22760"/>
<dbReference type="PATRIC" id="fig|1411691.4.peg.2487"/>
<dbReference type="EchoBASE" id="EB0041"/>
<dbReference type="eggNOG" id="COG1218">
    <property type="taxonomic scope" value="Bacteria"/>
</dbReference>
<dbReference type="HOGENOM" id="CLU_044118_3_0_6"/>
<dbReference type="InParanoid" id="P22255"/>
<dbReference type="OMA" id="WLWILDP"/>
<dbReference type="OrthoDB" id="9785695at2"/>
<dbReference type="PhylomeDB" id="P22255"/>
<dbReference type="BioCyc" id="EcoCyc:EG10043-MONOMER"/>
<dbReference type="BioCyc" id="MetaCyc:EG10043-MONOMER"/>
<dbReference type="SABIO-RK" id="P22255"/>
<dbReference type="PRO" id="PR:P22255"/>
<dbReference type="Proteomes" id="UP000000625">
    <property type="component" value="Chromosome"/>
</dbReference>
<dbReference type="GO" id="GO:0005886">
    <property type="term" value="C:plasma membrane"/>
    <property type="evidence" value="ECO:0007669"/>
    <property type="project" value="UniProtKB-SubCell"/>
</dbReference>
<dbReference type="GO" id="GO:0008441">
    <property type="term" value="F:3'(2'),5'-bisphosphate nucleotidase activity"/>
    <property type="evidence" value="ECO:0000314"/>
    <property type="project" value="EcoCyc"/>
</dbReference>
<dbReference type="GO" id="GO:0000287">
    <property type="term" value="F:magnesium ion binding"/>
    <property type="evidence" value="ECO:0000314"/>
    <property type="project" value="EcoCyc"/>
</dbReference>
<dbReference type="GO" id="GO:0050427">
    <property type="term" value="P:3'-phosphoadenosine 5'-phosphosulfate metabolic process"/>
    <property type="evidence" value="ECO:0000318"/>
    <property type="project" value="GO_Central"/>
</dbReference>
<dbReference type="GO" id="GO:0046854">
    <property type="term" value="P:phosphatidylinositol phosphate biosynthetic process"/>
    <property type="evidence" value="ECO:0007669"/>
    <property type="project" value="InterPro"/>
</dbReference>
<dbReference type="GO" id="GO:0000103">
    <property type="term" value="P:sulfate assimilation"/>
    <property type="evidence" value="ECO:0000315"/>
    <property type="project" value="EcoCyc"/>
</dbReference>
<dbReference type="CDD" id="cd01638">
    <property type="entry name" value="CysQ"/>
    <property type="match status" value="1"/>
</dbReference>
<dbReference type="FunFam" id="3.30.540.10:FF:000007">
    <property type="entry name" value="3'(2'),5'-bisphosphate nucleotidase CysQ"/>
    <property type="match status" value="1"/>
</dbReference>
<dbReference type="FunFam" id="3.40.190.80:FF:000005">
    <property type="entry name" value="3'(2'),5'-bisphosphate nucleotidase CysQ"/>
    <property type="match status" value="1"/>
</dbReference>
<dbReference type="Gene3D" id="3.40.190.80">
    <property type="match status" value="1"/>
</dbReference>
<dbReference type="Gene3D" id="3.30.540.10">
    <property type="entry name" value="Fructose-1,6-Bisphosphatase, subunit A, domain 1"/>
    <property type="match status" value="1"/>
</dbReference>
<dbReference type="HAMAP" id="MF_02095">
    <property type="entry name" value="CysQ"/>
    <property type="match status" value="1"/>
</dbReference>
<dbReference type="InterPro" id="IPR006240">
    <property type="entry name" value="CysQ"/>
</dbReference>
<dbReference type="InterPro" id="IPR050725">
    <property type="entry name" value="CysQ/Inositol_MonoPase"/>
</dbReference>
<dbReference type="InterPro" id="IPR020583">
    <property type="entry name" value="Inositol_monoP_metal-BS"/>
</dbReference>
<dbReference type="InterPro" id="IPR000760">
    <property type="entry name" value="Inositol_monophosphatase-like"/>
</dbReference>
<dbReference type="InterPro" id="IPR020550">
    <property type="entry name" value="Inositol_monophosphatase_CS"/>
</dbReference>
<dbReference type="NCBIfam" id="TIGR01331">
    <property type="entry name" value="bisphos_cysQ"/>
    <property type="match status" value="1"/>
</dbReference>
<dbReference type="NCBIfam" id="NF008182">
    <property type="entry name" value="PRK10931.1"/>
    <property type="match status" value="1"/>
</dbReference>
<dbReference type="PANTHER" id="PTHR43028">
    <property type="entry name" value="3'(2'),5'-BISPHOSPHATE NUCLEOTIDASE 1"/>
    <property type="match status" value="1"/>
</dbReference>
<dbReference type="PANTHER" id="PTHR43028:SF5">
    <property type="entry name" value="3'(2'),5'-BISPHOSPHATE NUCLEOTIDASE 1"/>
    <property type="match status" value="1"/>
</dbReference>
<dbReference type="Pfam" id="PF00459">
    <property type="entry name" value="Inositol_P"/>
    <property type="match status" value="1"/>
</dbReference>
<dbReference type="SUPFAM" id="SSF56655">
    <property type="entry name" value="Carbohydrate phosphatase"/>
    <property type="match status" value="1"/>
</dbReference>
<dbReference type="PROSITE" id="PS00629">
    <property type="entry name" value="IMP_1"/>
    <property type="match status" value="1"/>
</dbReference>
<dbReference type="PROSITE" id="PS00630">
    <property type="entry name" value="IMP_2"/>
    <property type="match status" value="1"/>
</dbReference>
<protein>
    <recommendedName>
        <fullName evidence="2 10">3'(2'),5'-bisphosphate nucleotidase CysQ</fullName>
        <ecNumber evidence="2 3">3.1.3.7</ecNumber>
    </recommendedName>
    <alternativeName>
        <fullName evidence="2 10">3'(2'),5-bisphosphonucleoside 3'(2')-phosphohydrolase</fullName>
    </alternativeName>
    <alternativeName>
        <fullName evidence="2 10">3'-phosphoadenosine 5'-phosphate phosphatase</fullName>
        <shortName evidence="2 10">PAP phosphatase</shortName>
    </alternativeName>
    <alternativeName>
        <fullName evidence="10">DPNPase</fullName>
    </alternativeName>
</protein>
<sequence length="246" mass="27176">MLDQVCQLARNAGDAIMQVYDGTKPMDVVSKADNSPVTAADIAAHTVIMDGLRTLTPDVPVLSEEDPPGWEVRQHWQRYWLVDPLDGTKEFIKRNGEFTVNIALIDHGKPILGVVYAPVMNVMYSAAEGKAWKEECGVRKQIQVRDARPPLVVISRSHADAELKEYLQQLGEHQTTSIGSSLKFCLVAEGQAQLYPRFGPTNIWDTAAGHAVAAAAGAHVHDWQGKPLDYTPRESFLNPGFRVSIY</sequence>
<organism>
    <name type="scientific">Escherichia coli (strain K12)</name>
    <dbReference type="NCBI Taxonomy" id="83333"/>
    <lineage>
        <taxon>Bacteria</taxon>
        <taxon>Pseudomonadati</taxon>
        <taxon>Pseudomonadota</taxon>
        <taxon>Gammaproteobacteria</taxon>
        <taxon>Enterobacterales</taxon>
        <taxon>Enterobacteriaceae</taxon>
        <taxon>Escherichia</taxon>
    </lineage>
</organism>
<accession>P22255</accession>
<accession>Q2M691</accession>
<name>CYSQ_ECOLI</name>
<gene>
    <name evidence="2 8" type="primary">cysQ</name>
    <name evidence="9" type="synonym">amtA</name>
    <name type="ordered locus">b4214</name>
    <name type="ordered locus">JW4172</name>
</gene>
<keyword id="KW-0997">Cell inner membrane</keyword>
<keyword id="KW-1003">Cell membrane</keyword>
<keyword id="KW-0378">Hydrolase</keyword>
<keyword id="KW-0460">Magnesium</keyword>
<keyword id="KW-0472">Membrane</keyword>
<keyword id="KW-0479">Metal-binding</keyword>
<keyword id="KW-1185">Reference proteome</keyword>
<feature type="chain" id="PRO_0000142541" description="3'(2'),5'-bisphosphate nucleotidase CysQ">
    <location>
        <begin position="1"/>
        <end position="246"/>
    </location>
</feature>
<feature type="binding site" evidence="1 2">
    <location>
        <position position="64"/>
    </location>
    <ligand>
        <name>Mg(2+)</name>
        <dbReference type="ChEBI" id="CHEBI:18420"/>
        <label>1</label>
    </ligand>
</feature>
<feature type="binding site" evidence="1 2">
    <location>
        <position position="64"/>
    </location>
    <ligand>
        <name>substrate</name>
    </ligand>
</feature>
<feature type="binding site" evidence="1 2">
    <location>
        <position position="83"/>
    </location>
    <ligand>
        <name>Mg(2+)</name>
        <dbReference type="ChEBI" id="CHEBI:18420"/>
        <label>1</label>
    </ligand>
</feature>
<feature type="binding site" evidence="1 2">
    <location>
        <position position="83"/>
    </location>
    <ligand>
        <name>Mg(2+)</name>
        <dbReference type="ChEBI" id="CHEBI:18420"/>
        <label>2</label>
    </ligand>
</feature>
<feature type="binding site" evidence="1 2">
    <location>
        <begin position="85"/>
        <end position="88"/>
    </location>
    <ligand>
        <name>substrate</name>
    </ligand>
</feature>
<feature type="binding site" evidence="1 2">
    <location>
        <position position="85"/>
    </location>
    <ligand>
        <name>Mg(2+)</name>
        <dbReference type="ChEBI" id="CHEBI:18420"/>
        <label>1</label>
    </ligand>
</feature>
<feature type="binding site" evidence="1 2">
    <location>
        <position position="86"/>
    </location>
    <ligand>
        <name>Mg(2+)</name>
        <dbReference type="ChEBI" id="CHEBI:18420"/>
        <label>2</label>
    </ligand>
</feature>
<feature type="binding site" evidence="1 2">
    <location>
        <position position="205"/>
    </location>
    <ligand>
        <name>Mg(2+)</name>
        <dbReference type="ChEBI" id="CHEBI:18420"/>
        <label>2</label>
    </ligand>
</feature>
<feature type="binding site" evidence="1 2">
    <location>
        <position position="205"/>
    </location>
    <ligand>
        <name>substrate</name>
    </ligand>
</feature>
<feature type="sequence conflict" description="In Ref. 1 and 2." evidence="10" ref="1 2">
    <original>QL</original>
    <variation>HV</variation>
    <location>
        <begin position="193"/>
        <end position="194"/>
    </location>
</feature>
<reference key="1">
    <citation type="journal article" date="1991" name="J. Gen. Microbiol.">
        <title>Ammonium transport in Escherichia coli: localization and nucleotide sequence of the amtA gene.</title>
        <authorList>
            <person name="Fabiny J.M."/>
            <person name="Jayakumar A."/>
            <person name="Chinault A.C."/>
            <person name="Barnes E.M. Jr."/>
        </authorList>
    </citation>
    <scope>NUCLEOTIDE SEQUENCE [GENOMIC DNA]</scope>
    <source>
        <strain>K12 / W3110 / ATCC 27325 / DSM 5911</strain>
    </source>
</reference>
<reference key="2">
    <citation type="journal article" date="1992" name="J. Bacteriol.">
        <title>cysQ, a gene needed for cysteine synthesis in Escherichia coli K-12 only during aerobic growth.</title>
        <authorList>
            <person name="Neuwald A.F."/>
            <person name="Krishnan B.R."/>
            <person name="Brikun I."/>
            <person name="Kulakauskas S."/>
            <person name="Suziedelis K."/>
            <person name="Tomcsanyi T."/>
            <person name="Leyh T.S."/>
            <person name="Berg D.E."/>
        </authorList>
    </citation>
    <scope>NUCLEOTIDE SEQUENCE [GENOMIC DNA]</scope>
    <scope>DISRUPTION PHENOTYPE</scope>
</reference>
<reference key="3">
    <citation type="journal article" date="1995" name="Nucleic Acids Res.">
        <title>Analysis of the Escherichia coli genome VI: DNA sequence of the region from 92.8 through 100 minutes.</title>
        <authorList>
            <person name="Burland V.D."/>
            <person name="Plunkett G. III"/>
            <person name="Sofia H.J."/>
            <person name="Daniels D.L."/>
            <person name="Blattner F.R."/>
        </authorList>
    </citation>
    <scope>NUCLEOTIDE SEQUENCE [LARGE SCALE GENOMIC DNA]</scope>
    <source>
        <strain>K12 / MG1655 / ATCC 47076</strain>
    </source>
</reference>
<reference key="4">
    <citation type="journal article" date="1997" name="Science">
        <title>The complete genome sequence of Escherichia coli K-12.</title>
        <authorList>
            <person name="Blattner F.R."/>
            <person name="Plunkett G. III"/>
            <person name="Bloch C.A."/>
            <person name="Perna N.T."/>
            <person name="Burland V."/>
            <person name="Riley M."/>
            <person name="Collado-Vides J."/>
            <person name="Glasner J.D."/>
            <person name="Rode C.K."/>
            <person name="Mayhew G.F."/>
            <person name="Gregor J."/>
            <person name="Davis N.W."/>
            <person name="Kirkpatrick H.A."/>
            <person name="Goeden M.A."/>
            <person name="Rose D.J."/>
            <person name="Mau B."/>
            <person name="Shao Y."/>
        </authorList>
    </citation>
    <scope>NUCLEOTIDE SEQUENCE [LARGE SCALE GENOMIC DNA]</scope>
    <source>
        <strain>K12 / MG1655 / ATCC 47076</strain>
    </source>
</reference>
<reference key="5">
    <citation type="journal article" date="2006" name="Mol. Syst. Biol.">
        <title>Highly accurate genome sequences of Escherichia coli K-12 strains MG1655 and W3110.</title>
        <authorList>
            <person name="Hayashi K."/>
            <person name="Morooka N."/>
            <person name="Yamamoto Y."/>
            <person name="Fujita K."/>
            <person name="Isono K."/>
            <person name="Choi S."/>
            <person name="Ohtsubo E."/>
            <person name="Baba T."/>
            <person name="Wanner B.L."/>
            <person name="Mori H."/>
            <person name="Horiuchi T."/>
        </authorList>
    </citation>
    <scope>NUCLEOTIDE SEQUENCE [LARGE SCALE GENOMIC DNA]</scope>
    <source>
        <strain>K12 / W3110 / ATCC 27325 / DSM 5911</strain>
    </source>
</reference>
<reference key="6">
    <citation type="journal article" date="1990" name="Mol. Gen. Genet.">
        <title>Transcription and regulation of the cpdB gene in Escherichia coli K12 and Salmonella typhimurium LT2: evidence for modulation of constitutive promoters by cyclic AMP-CRP complex.</title>
        <authorList>
            <person name="Liu J."/>
            <person name="Beacham I.R."/>
        </authorList>
    </citation>
    <scope>NUCLEOTIDE SEQUENCE [GENOMIC DNA] OF 1-98</scope>
    <source>
        <strain>K12</strain>
    </source>
</reference>
<reference key="7">
    <citation type="journal article" date="1995" name="J. Biol. Chem.">
        <title>A rice HAL2-like gene encodes a Ca(2+)-sensitive 3'(2'),5'-diphosphonucleoside 3'(2')-phosphohydrolase and complements yeast met22 and Escherichia coli cysQ mutations.</title>
        <authorList>
            <person name="Peng Z."/>
            <person name="Verma D.P.S."/>
        </authorList>
    </citation>
    <scope>FUNCTION</scope>
</reference>
<reference key="8">
    <citation type="journal article" date="1999" name="J. Biol. Chem.">
        <title>Cloning and characterization of a mammalian lithium-sensitive bisphosphate 3'-nucleotidase inhibited by inositol 1,4-bisphosphate.</title>
        <authorList>
            <person name="Spiegelberg B.D."/>
            <person name="Xiong J.-P."/>
            <person name="Smith J.J."/>
            <person name="Gu R.F."/>
            <person name="York J.D."/>
        </authorList>
    </citation>
    <scope>FUNCTION</scope>
    <scope>CATALYTIC ACTIVITY</scope>
    <scope>BIOPHYSICOCHEMICAL PROPERTIES</scope>
</reference>
<reference key="9">
    <citation type="journal article" date="2005" name="Mol. Cell. Proteomics">
        <title>Localization, annotation, and comparison of the Escherichia coli K-12 proteome under two states of growth.</title>
        <authorList>
            <person name="Lopez-Campistrous A."/>
            <person name="Semchuk P."/>
            <person name="Burke L."/>
            <person name="Palmer-Stone T."/>
            <person name="Brokx S.J."/>
            <person name="Broderick G."/>
            <person name="Bottorff D."/>
            <person name="Bolch S."/>
            <person name="Weiner J.H."/>
            <person name="Ellison M.J."/>
        </authorList>
    </citation>
    <scope>SUBCELLULAR LOCATION</scope>
</reference>
<reference key="10">
    <citation type="journal article" date="2006" name="Nucleic Acids Res.">
        <title>Oligoribonuclease is a common downstream target of lithium-induced pAp accumulation in Escherichia coli and human cells.</title>
        <authorList>
            <person name="Mechold U."/>
            <person name="Ogryzko V."/>
            <person name="Ngo S."/>
            <person name="Danchin A."/>
        </authorList>
    </citation>
    <scope>FUNCTION</scope>
    <scope>COFACTOR</scope>
    <scope>ACTIVITY REGULATION</scope>
</reference>
<comment type="function">
    <text evidence="3 5 7">Converts adenosine-3',5'-bisphosphate (PAP) to AMP. May also convert adenosine 3'-phosphate 5'-phosphosulfate (PAPS) to adenosine 5'-phosphosulfate (APS). Has 10000-fold lower activity towards inositol 1,4-bisphosphate (Ins(1,4)P2).</text>
</comment>
<comment type="catalytic activity">
    <reaction evidence="2 3">
        <text>adenosine 3',5'-bisphosphate + H2O = AMP + phosphate</text>
        <dbReference type="Rhea" id="RHEA:10040"/>
        <dbReference type="ChEBI" id="CHEBI:15377"/>
        <dbReference type="ChEBI" id="CHEBI:43474"/>
        <dbReference type="ChEBI" id="CHEBI:58343"/>
        <dbReference type="ChEBI" id="CHEBI:456215"/>
        <dbReference type="EC" id="3.1.3.7"/>
    </reaction>
</comment>
<comment type="cofactor">
    <cofactor evidence="2 11">
        <name>Mg(2+)</name>
        <dbReference type="ChEBI" id="CHEBI:18420"/>
    </cofactor>
</comment>
<comment type="activity regulation">
    <text evidence="5">Inhibited by lithium and calcium.</text>
</comment>
<comment type="biophysicochemical properties">
    <kinetics>
        <KM evidence="3">1.1 uM for PAP</KM>
        <KM evidence="3">1.2 mM for Ins(1,4)P2</KM>
    </kinetics>
</comment>
<comment type="subcellular location">
    <subcellularLocation>
        <location evidence="2 4">Cell inner membrane</location>
        <topology evidence="2 10">Peripheral membrane protein</topology>
        <orientation evidence="2 10">Cytoplasmic side</orientation>
    </subcellularLocation>
</comment>
<comment type="induction">
    <text>Strongly repressed during nitrogen excess.</text>
</comment>
<comment type="disruption phenotype">
    <text evidence="6">Mutants require cysteine or sulfite to grow under aerobic conditions.</text>
</comment>
<comment type="similarity">
    <text evidence="2 10">Belongs to the inositol monophosphatase superfamily. CysQ family.</text>
</comment>
<comment type="caution">
    <text evidence="12">Was originally thought to be an ammonium transport protein.</text>
</comment>
<evidence type="ECO:0000250" key="1">
    <source>
        <dbReference type="UniProtKB" id="P29218"/>
    </source>
</evidence>
<evidence type="ECO:0000255" key="2">
    <source>
        <dbReference type="HAMAP-Rule" id="MF_02095"/>
    </source>
</evidence>
<evidence type="ECO:0000269" key="3">
    <source>
    </source>
</evidence>
<evidence type="ECO:0000269" key="4">
    <source>
    </source>
</evidence>
<evidence type="ECO:0000269" key="5">
    <source>
    </source>
</evidence>
<evidence type="ECO:0000269" key="6">
    <source>
    </source>
</evidence>
<evidence type="ECO:0000269" key="7">
    <source>
    </source>
</evidence>
<evidence type="ECO:0000303" key="8">
    <source>
    </source>
</evidence>
<evidence type="ECO:0000303" key="9">
    <source>
    </source>
</evidence>
<evidence type="ECO:0000305" key="10"/>
<evidence type="ECO:0000305" key="11">
    <source>
    </source>
</evidence>
<evidence type="ECO:0000305" key="12">
    <source>
    </source>
</evidence>